<name>RIMK_VIBPA</name>
<accession>Q87JS5</accession>
<comment type="cofactor">
    <cofactor evidence="1">
        <name>Mg(2+)</name>
        <dbReference type="ChEBI" id="CHEBI:18420"/>
    </cofactor>
    <cofactor evidence="1">
        <name>Mn(2+)</name>
        <dbReference type="ChEBI" id="CHEBI:29035"/>
    </cofactor>
    <text evidence="1">Binds 2 magnesium or manganese ions per subunit.</text>
</comment>
<comment type="similarity">
    <text evidence="1">Belongs to the RimK family.</text>
</comment>
<gene>
    <name evidence="1" type="primary">rimK</name>
    <name type="ordered locus">VPA0173</name>
</gene>
<protein>
    <recommendedName>
        <fullName evidence="1">Probable alpha-L-glutamate ligase</fullName>
        <ecNumber evidence="1">6.3.2.-</ecNumber>
    </recommendedName>
</protein>
<reference key="1">
    <citation type="journal article" date="2003" name="Lancet">
        <title>Genome sequence of Vibrio parahaemolyticus: a pathogenic mechanism distinct from that of V. cholerae.</title>
        <authorList>
            <person name="Makino K."/>
            <person name="Oshima K."/>
            <person name="Kurokawa K."/>
            <person name="Yokoyama K."/>
            <person name="Uda T."/>
            <person name="Tagomori K."/>
            <person name="Iijima Y."/>
            <person name="Najima M."/>
            <person name="Nakano M."/>
            <person name="Yamashita A."/>
            <person name="Kubota Y."/>
            <person name="Kimura S."/>
            <person name="Yasunaga T."/>
            <person name="Honda T."/>
            <person name="Shinagawa H."/>
            <person name="Hattori M."/>
            <person name="Iida T."/>
        </authorList>
    </citation>
    <scope>NUCLEOTIDE SEQUENCE [LARGE SCALE GENOMIC DNA]</scope>
    <source>
        <strain>RIMD 2210633</strain>
    </source>
</reference>
<keyword id="KW-0067">ATP-binding</keyword>
<keyword id="KW-0436">Ligase</keyword>
<keyword id="KW-0460">Magnesium</keyword>
<keyword id="KW-0464">Manganese</keyword>
<keyword id="KW-0479">Metal-binding</keyword>
<keyword id="KW-0547">Nucleotide-binding</keyword>
<keyword id="KW-0648">Protein biosynthesis</keyword>
<proteinExistence type="inferred from homology"/>
<feature type="chain" id="PRO_0000205489" description="Probable alpha-L-glutamate ligase">
    <location>
        <begin position="1"/>
        <end position="301"/>
    </location>
</feature>
<feature type="domain" description="ATP-grasp" evidence="1">
    <location>
        <begin position="104"/>
        <end position="287"/>
    </location>
</feature>
<feature type="binding site" evidence="1">
    <location>
        <position position="141"/>
    </location>
    <ligand>
        <name>ATP</name>
        <dbReference type="ChEBI" id="CHEBI:30616"/>
    </ligand>
</feature>
<feature type="binding site" evidence="1">
    <location>
        <begin position="178"/>
        <end position="179"/>
    </location>
    <ligand>
        <name>ATP</name>
        <dbReference type="ChEBI" id="CHEBI:30616"/>
    </ligand>
</feature>
<feature type="binding site" evidence="1">
    <location>
        <position position="187"/>
    </location>
    <ligand>
        <name>ATP</name>
        <dbReference type="ChEBI" id="CHEBI:30616"/>
    </ligand>
</feature>
<feature type="binding site" evidence="1">
    <location>
        <begin position="211"/>
        <end position="213"/>
    </location>
    <ligand>
        <name>ATP</name>
        <dbReference type="ChEBI" id="CHEBI:30616"/>
    </ligand>
</feature>
<feature type="binding site" evidence="1">
    <location>
        <position position="248"/>
    </location>
    <ligand>
        <name>Mg(2+)</name>
        <dbReference type="ChEBI" id="CHEBI:18420"/>
        <label>1</label>
    </ligand>
</feature>
<feature type="binding site" evidence="1">
    <location>
        <position position="248"/>
    </location>
    <ligand>
        <name>Mn(2+)</name>
        <dbReference type="ChEBI" id="CHEBI:29035"/>
        <label>1</label>
    </ligand>
</feature>
<feature type="binding site" evidence="1">
    <location>
        <position position="260"/>
    </location>
    <ligand>
        <name>Mg(2+)</name>
        <dbReference type="ChEBI" id="CHEBI:18420"/>
        <label>1</label>
    </ligand>
</feature>
<feature type="binding site" evidence="1">
    <location>
        <position position="260"/>
    </location>
    <ligand>
        <name>Mg(2+)</name>
        <dbReference type="ChEBI" id="CHEBI:18420"/>
        <label>2</label>
    </ligand>
</feature>
<feature type="binding site" evidence="1">
    <location>
        <position position="260"/>
    </location>
    <ligand>
        <name>Mn(2+)</name>
        <dbReference type="ChEBI" id="CHEBI:29035"/>
        <label>1</label>
    </ligand>
</feature>
<feature type="binding site" evidence="1">
    <location>
        <position position="260"/>
    </location>
    <ligand>
        <name>Mn(2+)</name>
        <dbReference type="ChEBI" id="CHEBI:29035"/>
        <label>2</label>
    </ligand>
</feature>
<feature type="binding site" evidence="1">
    <location>
        <position position="262"/>
    </location>
    <ligand>
        <name>Mg(2+)</name>
        <dbReference type="ChEBI" id="CHEBI:18420"/>
        <label>2</label>
    </ligand>
</feature>
<feature type="binding site" evidence="1">
    <location>
        <position position="262"/>
    </location>
    <ligand>
        <name>Mn(2+)</name>
        <dbReference type="ChEBI" id="CHEBI:29035"/>
        <label>2</label>
    </ligand>
</feature>
<sequence length="301" mass="32875">MRIAILSRNENLYSTMRLKQAGEERGHQIDVIDTLHCYMDITSNNPMIRYKGEELPQYDAVIPRIGASITFYGTAVVRQFEMMGTFCVNESVAISRSRDKLRSLQLLSRKGIGLPRTGFAHHPDNIQDVIKNVGGAPLVIKLLEGTQGIGVVLAETNKAAESVIEAFMGLKANIMVQEFIEEAKGADIRCFVVGNKVIAAMKRQAKEGEFRSNLHRGGSAQLVRLSKEERATAVNAAKVMGLNLCGVDILQSKNGPVVMEVNSSPGLEGIELATGKDVAGMIFDFIEKNAKPNSNRTRGKG</sequence>
<evidence type="ECO:0000255" key="1">
    <source>
        <dbReference type="HAMAP-Rule" id="MF_01552"/>
    </source>
</evidence>
<organism>
    <name type="scientific">Vibrio parahaemolyticus serotype O3:K6 (strain RIMD 2210633)</name>
    <dbReference type="NCBI Taxonomy" id="223926"/>
    <lineage>
        <taxon>Bacteria</taxon>
        <taxon>Pseudomonadati</taxon>
        <taxon>Pseudomonadota</taxon>
        <taxon>Gammaproteobacteria</taxon>
        <taxon>Vibrionales</taxon>
        <taxon>Vibrionaceae</taxon>
        <taxon>Vibrio</taxon>
    </lineage>
</organism>
<dbReference type="EC" id="6.3.2.-" evidence="1"/>
<dbReference type="EMBL" id="BA000032">
    <property type="protein sequence ID" value="BAC61516.1"/>
    <property type="molecule type" value="Genomic_DNA"/>
</dbReference>
<dbReference type="RefSeq" id="NP_799683.1">
    <property type="nucleotide sequence ID" value="NC_004605.1"/>
</dbReference>
<dbReference type="RefSeq" id="WP_005459235.1">
    <property type="nucleotide sequence ID" value="NC_004605.1"/>
</dbReference>
<dbReference type="SMR" id="Q87JS5"/>
<dbReference type="GeneID" id="1190860"/>
<dbReference type="KEGG" id="vpa:VPA0173"/>
<dbReference type="PATRIC" id="fig|223926.6.peg.3131"/>
<dbReference type="eggNOG" id="COG0189">
    <property type="taxonomic scope" value="Bacteria"/>
</dbReference>
<dbReference type="HOGENOM" id="CLU_054353_0_1_6"/>
<dbReference type="Proteomes" id="UP000002493">
    <property type="component" value="Chromosome 2"/>
</dbReference>
<dbReference type="GO" id="GO:0005737">
    <property type="term" value="C:cytoplasm"/>
    <property type="evidence" value="ECO:0007669"/>
    <property type="project" value="TreeGrafter"/>
</dbReference>
<dbReference type="GO" id="GO:0005524">
    <property type="term" value="F:ATP binding"/>
    <property type="evidence" value="ECO:0007669"/>
    <property type="project" value="UniProtKB-UniRule"/>
</dbReference>
<dbReference type="GO" id="GO:0046872">
    <property type="term" value="F:metal ion binding"/>
    <property type="evidence" value="ECO:0007669"/>
    <property type="project" value="UniProtKB-KW"/>
</dbReference>
<dbReference type="GO" id="GO:0018169">
    <property type="term" value="F:ribosomal S6-glutamic acid ligase activity"/>
    <property type="evidence" value="ECO:0007669"/>
    <property type="project" value="TreeGrafter"/>
</dbReference>
<dbReference type="GO" id="GO:0036211">
    <property type="term" value="P:protein modification process"/>
    <property type="evidence" value="ECO:0007669"/>
    <property type="project" value="InterPro"/>
</dbReference>
<dbReference type="GO" id="GO:0009432">
    <property type="term" value="P:SOS response"/>
    <property type="evidence" value="ECO:0007669"/>
    <property type="project" value="TreeGrafter"/>
</dbReference>
<dbReference type="GO" id="GO:0006412">
    <property type="term" value="P:translation"/>
    <property type="evidence" value="ECO:0007669"/>
    <property type="project" value="UniProtKB-KW"/>
</dbReference>
<dbReference type="FunFam" id="3.40.50.20:FF:000004">
    <property type="entry name" value="Probable alpha-L-glutamate ligase"/>
    <property type="match status" value="1"/>
</dbReference>
<dbReference type="FunFam" id="3.30.1490.20:FF:000005">
    <property type="entry name" value="Probable alpha-L-glutamate ligase 1"/>
    <property type="match status" value="1"/>
</dbReference>
<dbReference type="Gene3D" id="3.40.50.20">
    <property type="match status" value="1"/>
</dbReference>
<dbReference type="Gene3D" id="3.30.1490.20">
    <property type="entry name" value="ATP-grasp fold, A domain"/>
    <property type="match status" value="1"/>
</dbReference>
<dbReference type="Gene3D" id="3.30.470.20">
    <property type="entry name" value="ATP-grasp fold, B domain"/>
    <property type="match status" value="1"/>
</dbReference>
<dbReference type="HAMAP" id="MF_01552">
    <property type="entry name" value="RimK"/>
    <property type="match status" value="1"/>
</dbReference>
<dbReference type="InterPro" id="IPR011761">
    <property type="entry name" value="ATP-grasp"/>
</dbReference>
<dbReference type="InterPro" id="IPR013651">
    <property type="entry name" value="ATP-grasp_RimK-type"/>
</dbReference>
<dbReference type="InterPro" id="IPR013815">
    <property type="entry name" value="ATP_grasp_subdomain_1"/>
</dbReference>
<dbReference type="InterPro" id="IPR023533">
    <property type="entry name" value="RimK"/>
</dbReference>
<dbReference type="InterPro" id="IPR041107">
    <property type="entry name" value="Rimk_N"/>
</dbReference>
<dbReference type="InterPro" id="IPR004666">
    <property type="entry name" value="Rp_bS6_RimK/Lys_biosynth_LsyX"/>
</dbReference>
<dbReference type="NCBIfam" id="NF007764">
    <property type="entry name" value="PRK10446.1"/>
    <property type="match status" value="1"/>
</dbReference>
<dbReference type="NCBIfam" id="TIGR00768">
    <property type="entry name" value="rimK_fam"/>
    <property type="match status" value="1"/>
</dbReference>
<dbReference type="PANTHER" id="PTHR21621:SF7">
    <property type="entry name" value="RIBOSOMAL PROTEIN BS6--L-GLUTAMATE LIGASE"/>
    <property type="match status" value="1"/>
</dbReference>
<dbReference type="PANTHER" id="PTHR21621">
    <property type="entry name" value="RIBOSOMAL PROTEIN S6 MODIFICATION PROTEIN"/>
    <property type="match status" value="1"/>
</dbReference>
<dbReference type="Pfam" id="PF08443">
    <property type="entry name" value="RimK"/>
    <property type="match status" value="1"/>
</dbReference>
<dbReference type="Pfam" id="PF18030">
    <property type="entry name" value="Rimk_N"/>
    <property type="match status" value="1"/>
</dbReference>
<dbReference type="SUPFAM" id="SSF56059">
    <property type="entry name" value="Glutathione synthetase ATP-binding domain-like"/>
    <property type="match status" value="1"/>
</dbReference>
<dbReference type="PROSITE" id="PS50975">
    <property type="entry name" value="ATP_GRASP"/>
    <property type="match status" value="1"/>
</dbReference>